<accession>B2IR82</accession>
<evidence type="ECO:0000255" key="1">
    <source>
        <dbReference type="HAMAP-Rule" id="MF_01420"/>
    </source>
</evidence>
<gene>
    <name evidence="1" type="primary">whiA</name>
    <name type="ordered locus">SPCG_1549</name>
</gene>
<keyword id="KW-0131">Cell cycle</keyword>
<keyword id="KW-0132">Cell division</keyword>
<keyword id="KW-0238">DNA-binding</keyword>
<protein>
    <recommendedName>
        <fullName evidence="1">Probable cell division protein WhiA</fullName>
    </recommendedName>
</protein>
<name>WHIA_STRPS</name>
<feature type="chain" id="PRO_0000376579" description="Probable cell division protein WhiA">
    <location>
        <begin position="1"/>
        <end position="303"/>
    </location>
</feature>
<feature type="DNA-binding region" description="H-T-H motif" evidence="1">
    <location>
        <begin position="272"/>
        <end position="303"/>
    </location>
</feature>
<sequence>MSFTVAVKEEILGQHHLSRHELSAIIKMSGSIGLSTSGLTLSVVTENAKLARHLYESFLHFYEIKSEIRHHQRSNLRKNRVYTVFTDEKVQDLLSDLHLADSFFGLETGIDEAILSDEEAGRAYLCGAFLANGSIRDPESGKYQLEISSVYLDHAQGIASLLQQFLLDAKVLERKKGAVTYLQRAEDIMDFLIVIGAMQARDDFERVKILRETRNDLNRANNAETANIARTVSASMKTINNISKIKDIMGLENLPVDLQEVAQLRIQHPDYSIQQLADSLSTPLTKSGVNHRLRKINKIADEL</sequence>
<organism>
    <name type="scientific">Streptococcus pneumoniae (strain CGSP14)</name>
    <dbReference type="NCBI Taxonomy" id="516950"/>
    <lineage>
        <taxon>Bacteria</taxon>
        <taxon>Bacillati</taxon>
        <taxon>Bacillota</taxon>
        <taxon>Bacilli</taxon>
        <taxon>Lactobacillales</taxon>
        <taxon>Streptococcaceae</taxon>
        <taxon>Streptococcus</taxon>
    </lineage>
</organism>
<proteinExistence type="inferred from homology"/>
<dbReference type="EMBL" id="CP001033">
    <property type="protein sequence ID" value="ACB90801.1"/>
    <property type="molecule type" value="Genomic_DNA"/>
</dbReference>
<dbReference type="RefSeq" id="WP_000011276.1">
    <property type="nucleotide sequence ID" value="NC_010582.1"/>
</dbReference>
<dbReference type="SMR" id="B2IR82"/>
<dbReference type="GeneID" id="45653198"/>
<dbReference type="KEGG" id="spw:SPCG_1549"/>
<dbReference type="HOGENOM" id="CLU_053282_0_0_9"/>
<dbReference type="GO" id="GO:0003677">
    <property type="term" value="F:DNA binding"/>
    <property type="evidence" value="ECO:0007669"/>
    <property type="project" value="UniProtKB-UniRule"/>
</dbReference>
<dbReference type="GO" id="GO:0051301">
    <property type="term" value="P:cell division"/>
    <property type="evidence" value="ECO:0007669"/>
    <property type="project" value="UniProtKB-UniRule"/>
</dbReference>
<dbReference type="GO" id="GO:0043937">
    <property type="term" value="P:regulation of sporulation"/>
    <property type="evidence" value="ECO:0007669"/>
    <property type="project" value="InterPro"/>
</dbReference>
<dbReference type="FunFam" id="3.10.28.10:FF:000004">
    <property type="entry name" value="Probable cell division protein WhiA"/>
    <property type="match status" value="1"/>
</dbReference>
<dbReference type="Gene3D" id="3.10.28.10">
    <property type="entry name" value="Homing endonucleases"/>
    <property type="match status" value="1"/>
</dbReference>
<dbReference type="HAMAP" id="MF_01420">
    <property type="entry name" value="HTH_type_WhiA"/>
    <property type="match status" value="1"/>
</dbReference>
<dbReference type="InterPro" id="IPR027434">
    <property type="entry name" value="Homing_endonucl"/>
</dbReference>
<dbReference type="InterPro" id="IPR018478">
    <property type="entry name" value="Sporu_reg_WhiA_N_dom"/>
</dbReference>
<dbReference type="InterPro" id="IPR003802">
    <property type="entry name" value="Sporulation_regulator_WhiA"/>
</dbReference>
<dbReference type="InterPro" id="IPR023054">
    <property type="entry name" value="Sporulation_regulator_WhiA_C"/>
</dbReference>
<dbReference type="InterPro" id="IPR039518">
    <property type="entry name" value="WhiA_LAGLIDADG_dom"/>
</dbReference>
<dbReference type="NCBIfam" id="TIGR00647">
    <property type="entry name" value="DNA_bind_WhiA"/>
    <property type="match status" value="1"/>
</dbReference>
<dbReference type="PANTHER" id="PTHR37307">
    <property type="entry name" value="CELL DIVISION PROTEIN WHIA-RELATED"/>
    <property type="match status" value="1"/>
</dbReference>
<dbReference type="PANTHER" id="PTHR37307:SF1">
    <property type="entry name" value="CELL DIVISION PROTEIN WHIA-RELATED"/>
    <property type="match status" value="1"/>
</dbReference>
<dbReference type="Pfam" id="PF02650">
    <property type="entry name" value="HTH_WhiA"/>
    <property type="match status" value="1"/>
</dbReference>
<dbReference type="Pfam" id="PF14527">
    <property type="entry name" value="LAGLIDADG_WhiA"/>
    <property type="match status" value="1"/>
</dbReference>
<dbReference type="Pfam" id="PF10298">
    <property type="entry name" value="WhiA_N"/>
    <property type="match status" value="1"/>
</dbReference>
<dbReference type="SUPFAM" id="SSF55608">
    <property type="entry name" value="Homing endonucleases"/>
    <property type="match status" value="1"/>
</dbReference>
<comment type="function">
    <text evidence="1">Involved in cell division and chromosome segregation.</text>
</comment>
<comment type="similarity">
    <text evidence="1">Belongs to the WhiA family.</text>
</comment>
<reference key="1">
    <citation type="journal article" date="2009" name="BMC Genomics">
        <title>Genome evolution driven by host adaptations results in a more virulent and antimicrobial-resistant Streptococcus pneumoniae serotype 14.</title>
        <authorList>
            <person name="Ding F."/>
            <person name="Tang P."/>
            <person name="Hsu M.-H."/>
            <person name="Cui P."/>
            <person name="Hu S."/>
            <person name="Yu J."/>
            <person name="Chiu C.-H."/>
        </authorList>
    </citation>
    <scope>NUCLEOTIDE SEQUENCE [LARGE SCALE GENOMIC DNA]</scope>
    <source>
        <strain>CGSP14</strain>
    </source>
</reference>